<keyword id="KW-0067">ATP-binding</keyword>
<keyword id="KW-0414">Isoprene biosynthesis</keyword>
<keyword id="KW-0418">Kinase</keyword>
<keyword id="KW-0547">Nucleotide-binding</keyword>
<keyword id="KW-1185">Reference proteome</keyword>
<keyword id="KW-0808">Transferase</keyword>
<sequence length="329" mass="35299">MTESRWYSTSPPAKLNLFLELLARRDDGFHELDTVMVAIDWRDELHVRRTTNPGVQLSVDWTDGRTSVAAELQVDEDNELLLVPTDDKNLVVRALNRLTETLRLDGGWEVQLNKNIPSGAGMGGASSDAASALQLGWAAARETQSDLPETLKNETLLSLAAEIGSDVPFFLGDLQADRLVQCAHATGRGEKLNFFTLANPLHAVVIYPAASVSTAQVYSRCQVPDSPQSSNELLRALQGIAAESEFSLHNALQAPARGLSSRIDPALECLSKAGLTHCHMTGSGSACFALADSSQQAAIAAETLRSTFPGGALIRPVMSCVVPSEIHIA</sequence>
<accession>Q7UEV3</accession>
<reference key="1">
    <citation type="journal article" date="2003" name="Proc. Natl. Acad. Sci. U.S.A.">
        <title>Complete genome sequence of the marine planctomycete Pirellula sp. strain 1.</title>
        <authorList>
            <person name="Gloeckner F.O."/>
            <person name="Kube M."/>
            <person name="Bauer M."/>
            <person name="Teeling H."/>
            <person name="Lombardot T."/>
            <person name="Ludwig W."/>
            <person name="Gade D."/>
            <person name="Beck A."/>
            <person name="Borzym K."/>
            <person name="Heitmann K."/>
            <person name="Rabus R."/>
            <person name="Schlesner H."/>
            <person name="Amann R."/>
            <person name="Reinhardt R."/>
        </authorList>
    </citation>
    <scope>NUCLEOTIDE SEQUENCE [LARGE SCALE GENOMIC DNA]</scope>
    <source>
        <strain>DSM 10527 / NCIMB 13988 / SH1</strain>
    </source>
</reference>
<dbReference type="EC" id="2.7.1.148" evidence="1"/>
<dbReference type="EMBL" id="BX294151">
    <property type="protein sequence ID" value="CAD78931.1"/>
    <property type="molecule type" value="Genomic_DNA"/>
</dbReference>
<dbReference type="RefSeq" id="NP_869474.1">
    <property type="nucleotide sequence ID" value="NC_005027.1"/>
</dbReference>
<dbReference type="RefSeq" id="WP_011122808.1">
    <property type="nucleotide sequence ID" value="NC_005027.1"/>
</dbReference>
<dbReference type="SMR" id="Q7UEV3"/>
<dbReference type="FunCoup" id="Q7UEV3">
    <property type="interactions" value="238"/>
</dbReference>
<dbReference type="STRING" id="243090.RB10537"/>
<dbReference type="EnsemblBacteria" id="CAD78931">
    <property type="protein sequence ID" value="CAD78931"/>
    <property type="gene ID" value="RB10537"/>
</dbReference>
<dbReference type="KEGG" id="rba:RB10537"/>
<dbReference type="PATRIC" id="fig|243090.15.peg.5090"/>
<dbReference type="eggNOG" id="COG1947">
    <property type="taxonomic scope" value="Bacteria"/>
</dbReference>
<dbReference type="HOGENOM" id="CLU_053057_1_1_0"/>
<dbReference type="InParanoid" id="Q7UEV3"/>
<dbReference type="OrthoDB" id="9809438at2"/>
<dbReference type="UniPathway" id="UPA00056">
    <property type="reaction ID" value="UER00094"/>
</dbReference>
<dbReference type="Proteomes" id="UP000001025">
    <property type="component" value="Chromosome"/>
</dbReference>
<dbReference type="GO" id="GO:0050515">
    <property type="term" value="F:4-(cytidine 5'-diphospho)-2-C-methyl-D-erythritol kinase activity"/>
    <property type="evidence" value="ECO:0000318"/>
    <property type="project" value="GO_Central"/>
</dbReference>
<dbReference type="GO" id="GO:0005524">
    <property type="term" value="F:ATP binding"/>
    <property type="evidence" value="ECO:0007669"/>
    <property type="project" value="UniProtKB-UniRule"/>
</dbReference>
<dbReference type="GO" id="GO:0019288">
    <property type="term" value="P:isopentenyl diphosphate biosynthetic process, methylerythritol 4-phosphate pathway"/>
    <property type="evidence" value="ECO:0007669"/>
    <property type="project" value="UniProtKB-UniRule"/>
</dbReference>
<dbReference type="GO" id="GO:0016114">
    <property type="term" value="P:terpenoid biosynthetic process"/>
    <property type="evidence" value="ECO:0007669"/>
    <property type="project" value="InterPro"/>
</dbReference>
<dbReference type="Gene3D" id="3.30.230.10">
    <property type="match status" value="1"/>
</dbReference>
<dbReference type="Gene3D" id="3.30.70.890">
    <property type="entry name" value="GHMP kinase, C-terminal domain"/>
    <property type="match status" value="1"/>
</dbReference>
<dbReference type="HAMAP" id="MF_00061">
    <property type="entry name" value="IspE"/>
    <property type="match status" value="1"/>
</dbReference>
<dbReference type="InterPro" id="IPR013750">
    <property type="entry name" value="GHMP_kinase_C_dom"/>
</dbReference>
<dbReference type="InterPro" id="IPR036554">
    <property type="entry name" value="GHMP_kinase_C_sf"/>
</dbReference>
<dbReference type="InterPro" id="IPR006204">
    <property type="entry name" value="GHMP_kinase_N_dom"/>
</dbReference>
<dbReference type="InterPro" id="IPR004424">
    <property type="entry name" value="IspE"/>
</dbReference>
<dbReference type="InterPro" id="IPR020568">
    <property type="entry name" value="Ribosomal_Su5_D2-typ_SF"/>
</dbReference>
<dbReference type="InterPro" id="IPR014721">
    <property type="entry name" value="Ribsml_uS5_D2-typ_fold_subgr"/>
</dbReference>
<dbReference type="NCBIfam" id="TIGR00154">
    <property type="entry name" value="ispE"/>
    <property type="match status" value="1"/>
</dbReference>
<dbReference type="PANTHER" id="PTHR43527">
    <property type="entry name" value="4-DIPHOSPHOCYTIDYL-2-C-METHYL-D-ERYTHRITOL KINASE, CHLOROPLASTIC"/>
    <property type="match status" value="1"/>
</dbReference>
<dbReference type="PANTHER" id="PTHR43527:SF2">
    <property type="entry name" value="4-DIPHOSPHOCYTIDYL-2-C-METHYL-D-ERYTHRITOL KINASE, CHLOROPLASTIC"/>
    <property type="match status" value="1"/>
</dbReference>
<dbReference type="Pfam" id="PF08544">
    <property type="entry name" value="GHMP_kinases_C"/>
    <property type="match status" value="1"/>
</dbReference>
<dbReference type="Pfam" id="PF00288">
    <property type="entry name" value="GHMP_kinases_N"/>
    <property type="match status" value="1"/>
</dbReference>
<dbReference type="PIRSF" id="PIRSF010376">
    <property type="entry name" value="IspE"/>
    <property type="match status" value="1"/>
</dbReference>
<dbReference type="SUPFAM" id="SSF55060">
    <property type="entry name" value="GHMP Kinase, C-terminal domain"/>
    <property type="match status" value="1"/>
</dbReference>
<dbReference type="SUPFAM" id="SSF54211">
    <property type="entry name" value="Ribosomal protein S5 domain 2-like"/>
    <property type="match status" value="1"/>
</dbReference>
<gene>
    <name evidence="1" type="primary">ispE</name>
    <name type="ordered locus">RB10537</name>
</gene>
<evidence type="ECO:0000255" key="1">
    <source>
        <dbReference type="HAMAP-Rule" id="MF_00061"/>
    </source>
</evidence>
<feature type="chain" id="PRO_0000189255" description="4-diphosphocytidyl-2-C-methyl-D-erythritol kinase">
    <location>
        <begin position="1"/>
        <end position="329"/>
    </location>
</feature>
<feature type="active site" evidence="1">
    <location>
        <position position="14"/>
    </location>
</feature>
<feature type="active site" evidence="1">
    <location>
        <position position="166"/>
    </location>
</feature>
<feature type="binding site" evidence="1">
    <location>
        <begin position="117"/>
        <end position="127"/>
    </location>
    <ligand>
        <name>ATP</name>
        <dbReference type="ChEBI" id="CHEBI:30616"/>
    </ligand>
</feature>
<organism>
    <name type="scientific">Rhodopirellula baltica (strain DSM 10527 / NCIMB 13988 / SH1)</name>
    <dbReference type="NCBI Taxonomy" id="243090"/>
    <lineage>
        <taxon>Bacteria</taxon>
        <taxon>Pseudomonadati</taxon>
        <taxon>Planctomycetota</taxon>
        <taxon>Planctomycetia</taxon>
        <taxon>Pirellulales</taxon>
        <taxon>Pirellulaceae</taxon>
        <taxon>Rhodopirellula</taxon>
    </lineage>
</organism>
<name>ISPE_RHOBA</name>
<protein>
    <recommendedName>
        <fullName evidence="1">4-diphosphocytidyl-2-C-methyl-D-erythritol kinase</fullName>
        <shortName evidence="1">CMK</shortName>
        <ecNumber evidence="1">2.7.1.148</ecNumber>
    </recommendedName>
    <alternativeName>
        <fullName evidence="1">4-(cytidine-5'-diphospho)-2-C-methyl-D-erythritol kinase</fullName>
    </alternativeName>
</protein>
<comment type="function">
    <text evidence="1">Catalyzes the phosphorylation of the position 2 hydroxy group of 4-diphosphocytidyl-2C-methyl-D-erythritol.</text>
</comment>
<comment type="catalytic activity">
    <reaction evidence="1">
        <text>4-CDP-2-C-methyl-D-erythritol + ATP = 4-CDP-2-C-methyl-D-erythritol 2-phosphate + ADP + H(+)</text>
        <dbReference type="Rhea" id="RHEA:18437"/>
        <dbReference type="ChEBI" id="CHEBI:15378"/>
        <dbReference type="ChEBI" id="CHEBI:30616"/>
        <dbReference type="ChEBI" id="CHEBI:57823"/>
        <dbReference type="ChEBI" id="CHEBI:57919"/>
        <dbReference type="ChEBI" id="CHEBI:456216"/>
        <dbReference type="EC" id="2.7.1.148"/>
    </reaction>
</comment>
<comment type="pathway">
    <text evidence="1">Isoprenoid biosynthesis; isopentenyl diphosphate biosynthesis via DXP pathway; isopentenyl diphosphate from 1-deoxy-D-xylulose 5-phosphate: step 3/6.</text>
</comment>
<comment type="similarity">
    <text evidence="1">Belongs to the GHMP kinase family. IspE subfamily.</text>
</comment>
<proteinExistence type="inferred from homology"/>